<name>KLH20_PONAB</name>
<evidence type="ECO:0000250" key="1"/>
<evidence type="ECO:0000250" key="2">
    <source>
        <dbReference type="UniProtKB" id="Q9Y2M5"/>
    </source>
</evidence>
<evidence type="ECO:0000255" key="3">
    <source>
        <dbReference type="PROSITE-ProRule" id="PRU00037"/>
    </source>
</evidence>
<proteinExistence type="evidence at transcript level"/>
<reference key="1">
    <citation type="submission" date="2004-11" db="EMBL/GenBank/DDBJ databases">
        <authorList>
            <consortium name="The German cDNA consortium"/>
        </authorList>
    </citation>
    <scope>NUCLEOTIDE SEQUENCE [LARGE SCALE MRNA]</scope>
    <source>
        <tissue>Kidney</tissue>
    </source>
</reference>
<dbReference type="EMBL" id="CR860200">
    <property type="protein sequence ID" value="CAH92342.1"/>
    <property type="molecule type" value="mRNA"/>
</dbReference>
<dbReference type="RefSeq" id="NP_001127542.1">
    <property type="nucleotide sequence ID" value="NM_001134070.2"/>
</dbReference>
<dbReference type="SMR" id="Q5R7B8"/>
<dbReference type="FunCoup" id="Q5R7B8">
    <property type="interactions" value="3244"/>
</dbReference>
<dbReference type="STRING" id="9601.ENSPPYP00000000573"/>
<dbReference type="GeneID" id="100174619"/>
<dbReference type="KEGG" id="pon:100174619"/>
<dbReference type="CTD" id="27252"/>
<dbReference type="eggNOG" id="KOG4441">
    <property type="taxonomic scope" value="Eukaryota"/>
</dbReference>
<dbReference type="InParanoid" id="Q5R7B8"/>
<dbReference type="OrthoDB" id="45365at2759"/>
<dbReference type="UniPathway" id="UPA00143"/>
<dbReference type="Proteomes" id="UP000001595">
    <property type="component" value="Unplaced"/>
</dbReference>
<dbReference type="GO" id="GO:0030424">
    <property type="term" value="C:axon"/>
    <property type="evidence" value="ECO:0007669"/>
    <property type="project" value="UniProtKB-SubCell"/>
</dbReference>
<dbReference type="GO" id="GO:0031463">
    <property type="term" value="C:Cul3-RING ubiquitin ligase complex"/>
    <property type="evidence" value="ECO:0000250"/>
    <property type="project" value="UniProtKB"/>
</dbReference>
<dbReference type="GO" id="GO:0005737">
    <property type="term" value="C:cytoplasm"/>
    <property type="evidence" value="ECO:0000250"/>
    <property type="project" value="UniProtKB"/>
</dbReference>
<dbReference type="GO" id="GO:0005829">
    <property type="term" value="C:cytosol"/>
    <property type="evidence" value="ECO:0007669"/>
    <property type="project" value="GOC"/>
</dbReference>
<dbReference type="GO" id="GO:0030425">
    <property type="term" value="C:dendrite"/>
    <property type="evidence" value="ECO:0007669"/>
    <property type="project" value="UniProtKB-SubCell"/>
</dbReference>
<dbReference type="GO" id="GO:0048471">
    <property type="term" value="C:perinuclear region of cytoplasm"/>
    <property type="evidence" value="ECO:0007669"/>
    <property type="project" value="UniProtKB-SubCell"/>
</dbReference>
<dbReference type="GO" id="GO:0016605">
    <property type="term" value="C:PML body"/>
    <property type="evidence" value="ECO:0000250"/>
    <property type="project" value="UniProtKB"/>
</dbReference>
<dbReference type="GO" id="GO:0005802">
    <property type="term" value="C:trans-Golgi network"/>
    <property type="evidence" value="ECO:0000250"/>
    <property type="project" value="UniProtKB"/>
</dbReference>
<dbReference type="GO" id="GO:0003779">
    <property type="term" value="F:actin binding"/>
    <property type="evidence" value="ECO:0007669"/>
    <property type="project" value="UniProtKB-KW"/>
</dbReference>
<dbReference type="GO" id="GO:0019964">
    <property type="term" value="F:type II interferon binding"/>
    <property type="evidence" value="ECO:0000250"/>
    <property type="project" value="UniProtKB"/>
</dbReference>
<dbReference type="GO" id="GO:0006895">
    <property type="term" value="P:Golgi to endosome transport"/>
    <property type="evidence" value="ECO:0000250"/>
    <property type="project" value="UniProtKB"/>
</dbReference>
<dbReference type="GO" id="GO:0043066">
    <property type="term" value="P:negative regulation of apoptotic process"/>
    <property type="evidence" value="ECO:0000250"/>
    <property type="project" value="UniProtKB"/>
</dbReference>
<dbReference type="GO" id="GO:0043161">
    <property type="term" value="P:proteasome-mediated ubiquitin-dependent protein catabolic process"/>
    <property type="evidence" value="ECO:0000250"/>
    <property type="project" value="UniProtKB"/>
</dbReference>
<dbReference type="GO" id="GO:1990390">
    <property type="term" value="P:protein K33-linked ubiquitination"/>
    <property type="evidence" value="ECO:0000250"/>
    <property type="project" value="UniProtKB"/>
</dbReference>
<dbReference type="GO" id="GO:0015031">
    <property type="term" value="P:protein transport"/>
    <property type="evidence" value="ECO:0007669"/>
    <property type="project" value="UniProtKB-KW"/>
</dbReference>
<dbReference type="GO" id="GO:0016567">
    <property type="term" value="P:protein ubiquitination"/>
    <property type="evidence" value="ECO:0000250"/>
    <property type="project" value="UniProtKB"/>
</dbReference>
<dbReference type="CDD" id="cd18459">
    <property type="entry name" value="BACK_KLHL20"/>
    <property type="match status" value="1"/>
</dbReference>
<dbReference type="CDD" id="cd18249">
    <property type="entry name" value="BTB_POZ_KLHL20_KLEIP"/>
    <property type="match status" value="1"/>
</dbReference>
<dbReference type="FunFam" id="1.25.40.420:FF:000001">
    <property type="entry name" value="Kelch-like family member 12"/>
    <property type="match status" value="1"/>
</dbReference>
<dbReference type="FunFam" id="2.120.10.80:FF:000006">
    <property type="entry name" value="Kelch-like family member 20"/>
    <property type="match status" value="1"/>
</dbReference>
<dbReference type="FunFam" id="3.30.710.10:FF:000001">
    <property type="entry name" value="Kelch-like family member 20"/>
    <property type="match status" value="1"/>
</dbReference>
<dbReference type="Gene3D" id="1.25.40.420">
    <property type="match status" value="1"/>
</dbReference>
<dbReference type="Gene3D" id="2.120.10.80">
    <property type="entry name" value="Kelch-type beta propeller"/>
    <property type="match status" value="1"/>
</dbReference>
<dbReference type="Gene3D" id="3.30.710.10">
    <property type="entry name" value="Potassium Channel Kv1.1, Chain A"/>
    <property type="match status" value="1"/>
</dbReference>
<dbReference type="InterPro" id="IPR011705">
    <property type="entry name" value="BACK"/>
</dbReference>
<dbReference type="InterPro" id="IPR017096">
    <property type="entry name" value="BTB-kelch_protein"/>
</dbReference>
<dbReference type="InterPro" id="IPR000210">
    <property type="entry name" value="BTB/POZ_dom"/>
</dbReference>
<dbReference type="InterPro" id="IPR015915">
    <property type="entry name" value="Kelch-typ_b-propeller"/>
</dbReference>
<dbReference type="InterPro" id="IPR006652">
    <property type="entry name" value="Kelch_1"/>
</dbReference>
<dbReference type="InterPro" id="IPR011333">
    <property type="entry name" value="SKP1/BTB/POZ_sf"/>
</dbReference>
<dbReference type="PANTHER" id="PTHR24412">
    <property type="entry name" value="KELCH PROTEIN"/>
    <property type="match status" value="1"/>
</dbReference>
<dbReference type="PANTHER" id="PTHR24412:SF451">
    <property type="entry name" value="KELCH-LIKE PROTEIN 20"/>
    <property type="match status" value="1"/>
</dbReference>
<dbReference type="Pfam" id="PF07707">
    <property type="entry name" value="BACK"/>
    <property type="match status" value="1"/>
</dbReference>
<dbReference type="Pfam" id="PF00651">
    <property type="entry name" value="BTB"/>
    <property type="match status" value="1"/>
</dbReference>
<dbReference type="Pfam" id="PF01344">
    <property type="entry name" value="Kelch_1"/>
    <property type="match status" value="2"/>
</dbReference>
<dbReference type="Pfam" id="PF24681">
    <property type="entry name" value="Kelch_KLHDC2_KLHL20_DRC7"/>
    <property type="match status" value="1"/>
</dbReference>
<dbReference type="PIRSF" id="PIRSF037037">
    <property type="entry name" value="Kelch-like_protein_gigaxonin"/>
    <property type="match status" value="1"/>
</dbReference>
<dbReference type="PRINTS" id="PR00501">
    <property type="entry name" value="KELCHREPEAT"/>
</dbReference>
<dbReference type="SMART" id="SM00875">
    <property type="entry name" value="BACK"/>
    <property type="match status" value="1"/>
</dbReference>
<dbReference type="SMART" id="SM00225">
    <property type="entry name" value="BTB"/>
    <property type="match status" value="1"/>
</dbReference>
<dbReference type="SMART" id="SM00612">
    <property type="entry name" value="Kelch"/>
    <property type="match status" value="6"/>
</dbReference>
<dbReference type="SUPFAM" id="SSF117281">
    <property type="entry name" value="Kelch motif"/>
    <property type="match status" value="1"/>
</dbReference>
<dbReference type="SUPFAM" id="SSF54695">
    <property type="entry name" value="POZ domain"/>
    <property type="match status" value="1"/>
</dbReference>
<dbReference type="PROSITE" id="PS50097">
    <property type="entry name" value="BTB"/>
    <property type="match status" value="1"/>
</dbReference>
<organism>
    <name type="scientific">Pongo abelii</name>
    <name type="common">Sumatran orangutan</name>
    <name type="synonym">Pongo pygmaeus abelii</name>
    <dbReference type="NCBI Taxonomy" id="9601"/>
    <lineage>
        <taxon>Eukaryota</taxon>
        <taxon>Metazoa</taxon>
        <taxon>Chordata</taxon>
        <taxon>Craniata</taxon>
        <taxon>Vertebrata</taxon>
        <taxon>Euteleostomi</taxon>
        <taxon>Mammalia</taxon>
        <taxon>Eutheria</taxon>
        <taxon>Euarchontoglires</taxon>
        <taxon>Primates</taxon>
        <taxon>Haplorrhini</taxon>
        <taxon>Catarrhini</taxon>
        <taxon>Hominidae</taxon>
        <taxon>Pongo</taxon>
    </lineage>
</organism>
<keyword id="KW-0009">Actin-binding</keyword>
<keyword id="KW-0966">Cell projection</keyword>
<keyword id="KW-0963">Cytoplasm</keyword>
<keyword id="KW-0333">Golgi apparatus</keyword>
<keyword id="KW-0880">Kelch repeat</keyword>
<keyword id="KW-0539">Nucleus</keyword>
<keyword id="KW-0653">Protein transport</keyword>
<keyword id="KW-1185">Reference proteome</keyword>
<keyword id="KW-0677">Repeat</keyword>
<keyword id="KW-0813">Transport</keyword>
<keyword id="KW-0833">Ubl conjugation pathway</keyword>
<comment type="function">
    <text evidence="2">Substrate-specific adapter of a BCR (BTB-CUL3-RBX1) E3 ubiquitin-protein ligase complex involved in interferon response and anterograde Golgi to endosome transport. The BCR(KLHL20) E3 ubiquitin ligase complex mediates the ubiquitination of DAPK1, leading to its degradation by the proteasome, thereby acting as a negative regulator of apoptosis. The BCR(KLHL20) E3 ubiquitin ligase complex also specifically mediates 'Lys-33'-linked ubiquitination. Involved in anterograde Golgi to endosome transport by mediating 'Lys-33'-linked ubiquitination of CORO7, promoting interaction between CORO7 and EPS15, thereby facilitating actin polymerization and post-Golgi trafficking. Also acts as a regulator of endothelial migration during angiogenesis by controlling the activation of Rho GTPases. The BCR(KLHL20) E3 ubiquitin ligase complex acts as a regulator of neurite outgrowth by mediating ubiquitination and degradation of PDZ-RhoGEF/ARHGEF11 (By similarity).</text>
</comment>
<comment type="pathway">
    <text>Protein modification; protein ubiquitination.</text>
</comment>
<comment type="subunit">
    <text evidence="2">Component of the BCR(KLHL20) E3 ubiquitin ligase complex, at least composed of CUL3, KLHL20 and RBX1. Interacts with PDZ-RhoGEF/ARHGEF11, DAPK1, PML and CORO7. Interacts with F-actin. Interacts with IFN-gamma (IFNG) (By similarity). Interacts (via kelch repeats) with IVNS1ABP (via kelch repeats); this interaction blocks the assembly of CUL3-KLHL20 complex (By similarity).</text>
</comment>
<comment type="subcellular location">
    <subcellularLocation>
        <location evidence="1">Cytoplasm</location>
        <location evidence="1">Perinuclear region</location>
    </subcellularLocation>
    <subcellularLocation>
        <location evidence="1">Nucleus</location>
    </subcellularLocation>
    <subcellularLocation>
        <location evidence="1">Golgi apparatus</location>
        <location evidence="1">trans-Golgi network</location>
    </subcellularLocation>
    <subcellularLocation>
        <location evidence="1">Cell projection</location>
        <location evidence="1">Axon</location>
    </subcellularLocation>
    <subcellularLocation>
        <location evidence="1">Cell projection</location>
        <location evidence="1">Dendrite</location>
    </subcellularLocation>
    <text evidence="1">Localizes in the perinuclear region in normal conditions. Following IFN-alpha or IFN-gamma treatment, it is relocalized and sequestrated to the PML nuclear bodies, preventing DAPK1 ubiquitination (By similarity).</text>
</comment>
<accession>Q5R7B8</accession>
<feature type="chain" id="PRO_0000285811" description="Kelch-like protein 20">
    <location>
        <begin position="1"/>
        <end position="609"/>
    </location>
</feature>
<feature type="domain" description="BTB" evidence="3">
    <location>
        <begin position="68"/>
        <end position="135"/>
    </location>
</feature>
<feature type="domain" description="BACK">
    <location>
        <begin position="170"/>
        <end position="272"/>
    </location>
</feature>
<feature type="repeat" description="Kelch 1">
    <location>
        <begin position="319"/>
        <end position="365"/>
    </location>
</feature>
<feature type="repeat" description="Kelch 2">
    <location>
        <begin position="367"/>
        <end position="413"/>
    </location>
</feature>
<feature type="repeat" description="Kelch 3">
    <location>
        <begin position="414"/>
        <end position="460"/>
    </location>
</feature>
<feature type="repeat" description="Kelch 4">
    <location>
        <begin position="462"/>
        <end position="507"/>
    </location>
</feature>
<feature type="repeat" description="Kelch 5">
    <location>
        <begin position="509"/>
        <end position="554"/>
    </location>
</feature>
<feature type="repeat" description="Kelch 6">
    <location>
        <begin position="556"/>
        <end position="601"/>
    </location>
</feature>
<sequence length="609" mass="68042">MEGKPMRRCTNIRPGETGMDVTSRCTLGDPNKLPEGVPQPARMPYISDKHPRQTLEVINLLRKHRELCDVVLVVGAKKIYAHRVILSACSPYFRAMFTGELAESRQTEVVIRDIDERAMELLIDFAYTSQITVEEGNVQTLLPAACLLQLAEIQEACCEFLKRQLDPSNCLGIRAFADTHSCRELLRIADKFTQHNFQEVMESEEFMLLPANQLIDIISSDELNVRSEEQVFNAVMAWVKYSTQERRPQLPQVLQHVRLPLLSPKFLVGTVGSDPLIKSDEECRDLVDEAKNYLLLPQERPLMQGPRTRPRKPIRCGEVLFAVGGWCSGDAISSVERYDPQTNEWRMVASMSKRRCGVGVSVLDDLLYAVGGHDGSSYLNSVERYDPKTNQWSSDVAPTSTCRTSVGVAVLGGFLYAVGGQDGVSCLNIVERYDPKENKWTRVASMSTRRLGVAVAVLGGFLYAVGGSDGTSPLNTVERYNPQENRWHTIAPMGTRRKHLGCAVYQDMIYAVGGRDDTTELSSAERYNPRTNQWSPVVAMTSRRSGVGLAVVNGQLMAVRGFDGTTYLKTIEVFDPDANTWRLYGGMNYRRLGGGVGVIKMTHCESHIW</sequence>
<protein>
    <recommendedName>
        <fullName>Kelch-like protein 20</fullName>
    </recommendedName>
</protein>
<gene>
    <name type="primary">KLHL20</name>
</gene>